<dbReference type="EMBL" id="AY724845">
    <property type="protein sequence ID" value="AAU21076.1"/>
    <property type="molecule type" value="Genomic_DNA"/>
</dbReference>
<dbReference type="EMBL" id="AY677153">
    <property type="protein sequence ID" value="AAV28581.1"/>
    <property type="molecule type" value="Genomic_DNA"/>
</dbReference>
<dbReference type="RefSeq" id="XP_003829657.1">
    <property type="nucleotide sequence ID" value="XM_003829609.2"/>
</dbReference>
<dbReference type="SMR" id="Q646E3"/>
<dbReference type="STRING" id="9597.ENSPPAP00000006487"/>
<dbReference type="Ensembl" id="ENSPPAT00000027830.1">
    <property type="protein sequence ID" value="ENSPPAP00000006487.1"/>
    <property type="gene ID" value="ENSPPAG00000025189.1"/>
</dbReference>
<dbReference type="eggNOG" id="ENOG502TE6U">
    <property type="taxonomic scope" value="Eukaryota"/>
</dbReference>
<dbReference type="GeneTree" id="ENSGT01100000263477"/>
<dbReference type="OMA" id="INFIAWV"/>
<dbReference type="Proteomes" id="UP000240080">
    <property type="component" value="Chromosome 12"/>
</dbReference>
<dbReference type="Bgee" id="ENSPPAG00000025189">
    <property type="expression patterns" value="Expressed in cerebellum and 1 other cell type or tissue"/>
</dbReference>
<dbReference type="GO" id="GO:0005886">
    <property type="term" value="C:plasma membrane"/>
    <property type="evidence" value="ECO:0007669"/>
    <property type="project" value="UniProtKB-ARBA"/>
</dbReference>
<dbReference type="GO" id="GO:0033038">
    <property type="term" value="F:bitter taste receptor activity"/>
    <property type="evidence" value="ECO:0007669"/>
    <property type="project" value="InterPro"/>
</dbReference>
<dbReference type="GO" id="GO:0004930">
    <property type="term" value="F:G protein-coupled receptor activity"/>
    <property type="evidence" value="ECO:0007669"/>
    <property type="project" value="UniProtKB-KW"/>
</dbReference>
<dbReference type="CDD" id="cd15027">
    <property type="entry name" value="7tm_TAS2R43-like"/>
    <property type="match status" value="1"/>
</dbReference>
<dbReference type="FunFam" id="1.20.1070.10:FF:000042">
    <property type="entry name" value="Taste receptor type 2 member 7"/>
    <property type="match status" value="1"/>
</dbReference>
<dbReference type="Gene3D" id="1.20.1070.10">
    <property type="entry name" value="Rhodopsin 7-helix transmembrane proteins"/>
    <property type="match status" value="1"/>
</dbReference>
<dbReference type="InterPro" id="IPR007960">
    <property type="entry name" value="TAS2R"/>
</dbReference>
<dbReference type="PANTHER" id="PTHR11394">
    <property type="entry name" value="TASTE RECEPTOR TYPE 2"/>
    <property type="match status" value="1"/>
</dbReference>
<dbReference type="PANTHER" id="PTHR11394:SF27">
    <property type="entry name" value="TASTE RECEPTOR TYPE 2 MEMBER 20"/>
    <property type="match status" value="1"/>
</dbReference>
<dbReference type="Pfam" id="PF05296">
    <property type="entry name" value="TAS2R"/>
    <property type="match status" value="1"/>
</dbReference>
<dbReference type="SUPFAM" id="SSF81321">
    <property type="entry name" value="Family A G protein-coupled receptor-like"/>
    <property type="match status" value="1"/>
</dbReference>
<protein>
    <recommendedName>
        <fullName>Taste receptor type 2 member 20</fullName>
    </recommendedName>
    <alternativeName>
        <fullName>Taste receptor type 2 member 49</fullName>
        <shortName>T2R49</shortName>
    </alternativeName>
</protein>
<accession>Q646E3</accession>
<sequence length="309" mass="35263">MMSFLHIVFSILVVVAFILGNFANGFIALINFIAWVKRQKISSADQIIAALAVSRVGLLWVILLHWYSTVLNPTSSNLKVIIFISNAWAVTNHFSIWLATSLSIFYLLKIVNFSRLIFHHLKRKAKSVVLVIVLGSLFFLVCHLVMKNTYINVWTEECEGNVTWKIKLRNAMHLSNLTVAMLANLIPFTLTLISFLLLIYSLCKHLKKMQLHGKGSQDPSTKIHIKALQTVTSFLILLAIYFLCLITSFWNSKMRPKEIVLMLCQAFGIIYPSFHSFILIWGNKTLKQTFLSVLWQVTCWAKGQNQSTP</sequence>
<comment type="function">
    <text evidence="1">Receptor that may play a role in the perception of bitterness and is gustducin-linked. May play a role in sensing the chemical composition of the gastrointestinal content. The activity of this receptor may stimulate alpha gustducin, mediate PLC-beta-2 activation and lead to the gating of TRPM5 (By similarity).</text>
</comment>
<comment type="subcellular location">
    <subcellularLocation>
        <location>Membrane</location>
        <topology>Multi-pass membrane protein</topology>
    </subcellularLocation>
</comment>
<comment type="miscellaneous">
    <text>Most taste cells may be activated by a limited number of bitter compounds; individual taste cells can discriminate among bitter stimuli.</text>
</comment>
<comment type="similarity">
    <text evidence="3">Belongs to the G-protein coupled receptor T2R family.</text>
</comment>
<name>T2R20_PANPA</name>
<gene>
    <name type="primary">TAS2R20</name>
    <name type="synonym">TAS2R49</name>
</gene>
<evidence type="ECO:0000250" key="1"/>
<evidence type="ECO:0000255" key="2"/>
<evidence type="ECO:0000305" key="3"/>
<proteinExistence type="inferred from homology"/>
<reference key="1">
    <citation type="journal article" date="2005" name="Mol. Biol. Evol.">
        <title>Evolution of bitter taste receptors in humans and apes.</title>
        <authorList>
            <person name="Fischer A."/>
            <person name="Gilad Y."/>
            <person name="Man O."/>
            <person name="Paeaebo S."/>
        </authorList>
    </citation>
    <scope>NUCLEOTIDE SEQUENCE [GENOMIC DNA]</scope>
</reference>
<reference key="2">
    <citation type="journal article" date="2004" name="Proc. Natl. Acad. Sci. U.S.A.">
        <title>Divergence of T2R chemosensory receptor families in humans, bonobos, and chimpanzees.</title>
        <authorList>
            <person name="Parry C.M."/>
            <person name="Erkner A."/>
            <person name="le Coutre J."/>
        </authorList>
    </citation>
    <scope>NUCLEOTIDE SEQUENCE [GENOMIC DNA]</scope>
</reference>
<feature type="chain" id="PRO_0000082332" description="Taste receptor type 2 member 20">
    <location>
        <begin position="1"/>
        <end position="309"/>
    </location>
</feature>
<feature type="topological domain" description="Extracellular" evidence="2">
    <location>
        <begin position="1"/>
        <end position="6"/>
    </location>
</feature>
<feature type="transmembrane region" description="Helical; Name=1" evidence="2">
    <location>
        <begin position="7"/>
        <end position="27"/>
    </location>
</feature>
<feature type="topological domain" description="Cytoplasmic" evidence="2">
    <location>
        <begin position="28"/>
        <end position="46"/>
    </location>
</feature>
<feature type="transmembrane region" description="Helical; Name=2" evidence="2">
    <location>
        <begin position="47"/>
        <end position="67"/>
    </location>
</feature>
<feature type="topological domain" description="Extracellular" evidence="2">
    <location>
        <begin position="68"/>
        <end position="79"/>
    </location>
</feature>
<feature type="transmembrane region" description="Helical; Name=3" evidence="2">
    <location>
        <begin position="80"/>
        <end position="100"/>
    </location>
</feature>
<feature type="topological domain" description="Cytoplasmic" evidence="2">
    <location>
        <begin position="101"/>
        <end position="125"/>
    </location>
</feature>
<feature type="transmembrane region" description="Helical; Name=4" evidence="2">
    <location>
        <begin position="126"/>
        <end position="146"/>
    </location>
</feature>
<feature type="topological domain" description="Extracellular" evidence="2">
    <location>
        <begin position="147"/>
        <end position="178"/>
    </location>
</feature>
<feature type="transmembrane region" description="Helical; Name=5" evidence="2">
    <location>
        <begin position="179"/>
        <end position="199"/>
    </location>
</feature>
<feature type="topological domain" description="Cytoplasmic" evidence="2">
    <location>
        <begin position="200"/>
        <end position="229"/>
    </location>
</feature>
<feature type="transmembrane region" description="Helical; Name=6" evidence="2">
    <location>
        <begin position="230"/>
        <end position="250"/>
    </location>
</feature>
<feature type="topological domain" description="Extracellular" evidence="2">
    <location>
        <begin position="251"/>
        <end position="259"/>
    </location>
</feature>
<feature type="transmembrane region" description="Helical; Name=7" evidence="2">
    <location>
        <begin position="260"/>
        <end position="280"/>
    </location>
</feature>
<feature type="topological domain" description="Cytoplasmic" evidence="2">
    <location>
        <begin position="281"/>
        <end position="309"/>
    </location>
</feature>
<organism>
    <name type="scientific">Pan paniscus</name>
    <name type="common">Pygmy chimpanzee</name>
    <name type="synonym">Bonobo</name>
    <dbReference type="NCBI Taxonomy" id="9597"/>
    <lineage>
        <taxon>Eukaryota</taxon>
        <taxon>Metazoa</taxon>
        <taxon>Chordata</taxon>
        <taxon>Craniata</taxon>
        <taxon>Vertebrata</taxon>
        <taxon>Euteleostomi</taxon>
        <taxon>Mammalia</taxon>
        <taxon>Eutheria</taxon>
        <taxon>Euarchontoglires</taxon>
        <taxon>Primates</taxon>
        <taxon>Haplorrhini</taxon>
        <taxon>Catarrhini</taxon>
        <taxon>Hominidae</taxon>
        <taxon>Pan</taxon>
    </lineage>
</organism>
<keyword id="KW-0297">G-protein coupled receptor</keyword>
<keyword id="KW-0472">Membrane</keyword>
<keyword id="KW-0675">Receptor</keyword>
<keyword id="KW-1185">Reference proteome</keyword>
<keyword id="KW-0716">Sensory transduction</keyword>
<keyword id="KW-0919">Taste</keyword>
<keyword id="KW-0807">Transducer</keyword>
<keyword id="KW-0812">Transmembrane</keyword>
<keyword id="KW-1133">Transmembrane helix</keyword>